<reference evidence="14 15" key="1">
    <citation type="journal article" date="2000" name="J. Biol. Chem.">
        <title>Molecular cloning of a novel human I-mfa domain-containing protein that differently regulates human T-cell leukemia virus type I and HIV-1 expression.</title>
        <authorList>
            <person name="Thebault S."/>
            <person name="Gachon F."/>
            <person name="Lemasson I."/>
            <person name="Devaux C."/>
            <person name="Mesnard J.-M."/>
        </authorList>
    </citation>
    <scope>NUCLEOTIDE SEQUENCE [MRNA] (ISOFORMS 1 AND 2)</scope>
    <scope>FUNCTION</scope>
    <scope>SUBCELLULAR LOCATION</scope>
    <scope>TISSUE SPECIFICITY</scope>
    <source>
        <tissue evidence="4">T-cell</tissue>
    </source>
</reference>
<reference evidence="14 16" key="2">
    <citation type="journal article" date="2005" name="Proc. Natl. Acad. Sci. U.S.A.">
        <title>Direct interaction of the human I-mfa domain-containing protein, HIC, with HIV-1 Tat results in cytoplasmic sequestration and control of Tat activity.</title>
        <authorList>
            <person name="Gautier V.W."/>
            <person name="Sheehy N."/>
            <person name="Duffy M."/>
            <person name="Hashimoto K."/>
            <person name="Hall W.W."/>
        </authorList>
    </citation>
    <scope>NUCLEOTIDE SEQUENCE [MRNA] (ISOFORM 2)</scope>
    <scope>FUNCTION</scope>
    <scope>INTERACTION WITH HIV-1 TAT (MICROBIAL INFECTION)</scope>
    <scope>SUBCELLULAR LOCATION</scope>
    <source>
        <tissue evidence="8">Leukocyte</tissue>
    </source>
</reference>
<reference evidence="14" key="3">
    <citation type="journal article" date="2000" name="Eur. J. Cell Biol.">
        <title>Sequence requirement for the nucleolar localization of human I-mfa domain-containing protein (HIC p40).</title>
        <authorList>
            <person name="Thebault S."/>
            <person name="Basbous J."/>
            <person name="Gay B."/>
            <person name="Devaux C."/>
            <person name="Mesnard J.-M."/>
        </authorList>
    </citation>
    <scope>SUBCELLULAR LOCATION</scope>
    <scope>DOMAIN</scope>
    <scope>NUCLEOLAR LOCALIZATION SIGNAL</scope>
</reference>
<reference evidence="14" key="4">
    <citation type="journal article" date="2002" name="Mol. Cell. Biol.">
        <title>I-mfa domain proteins interact with Axin and affect its regulation of the Wnt and c-Jun N-terminal kinase signaling pathways.</title>
        <authorList>
            <person name="Kusano S."/>
            <person name="Raab-Traub N."/>
        </authorList>
    </citation>
    <scope>FUNCTION</scope>
    <scope>INTERACTION WITH AXIN1 AND LEF1</scope>
</reference>
<reference evidence="14" key="5">
    <citation type="journal article" date="2003" name="Mol. Cell. Biol.">
        <title>The human I-mfa domain-containing protein, HIC, interacts with cyclin T1 and modulates P-TEFb-dependent transcription.</title>
        <authorList>
            <person name="Young T.M."/>
            <person name="Wang Q."/>
            <person name="Pe'ery T."/>
            <person name="Mathews M.B."/>
        </authorList>
    </citation>
    <scope>FUNCTION</scope>
    <scope>INTERACTION WITH CCNT1 AND HIV-1 TAT (MICROBIAL INFECTION)</scope>
    <scope>SUBCELLULAR LOCATION</scope>
</reference>
<reference key="6">
    <citation type="journal article" date="2006" name="Retrovirology">
        <title>The human I-mfa domain containing protein, HIC, interacts with HIV-1 Tat and Rev and sequesters them in the cytoplasm.</title>
        <authorList>
            <person name="Gu L."/>
            <person name="Gautier V."/>
            <person name="Sheehy N."/>
            <person name="Tsuji T."/>
            <person name="Hayakawa H."/>
            <person name="Hall W."/>
        </authorList>
    </citation>
    <scope>FUNCTION</scope>
    <scope>INTERACTION WITH HIV-1 TAT AND HIV-1 REV (MICROBIAL INFECTION)</scope>
</reference>
<reference key="7">
    <citation type="journal article" date="2007" name="J. Mol. Biol.">
        <title>Developmental regulators containing the I-mfa domain interact with T cyclins and Tat and modulate transcription.</title>
        <authorList>
            <person name="Wang Q."/>
            <person name="Young T.M."/>
            <person name="Mathews M.B."/>
            <person name="Pe'ery T."/>
        </authorList>
    </citation>
    <scope>INTERACTION WITH CCNT2</scope>
</reference>
<reference key="8">
    <citation type="journal article" date="2023" name="Science">
        <title>MyoD-family inhibitor proteins act as auxiliary subunits of Piezo channels.</title>
        <authorList>
            <person name="Zhou Z."/>
            <person name="Ma X."/>
            <person name="Lin Y."/>
            <person name="Cheng D."/>
            <person name="Bavi N."/>
            <person name="Secker G.A."/>
            <person name="Li J.V."/>
            <person name="Janbandhu V."/>
            <person name="Sutton D.L."/>
            <person name="Scott H.S."/>
            <person name="Yao M."/>
            <person name="Harvey R.P."/>
            <person name="Harvey N.L."/>
            <person name="Corry B."/>
            <person name="Zhang Y."/>
            <person name="Cox C.D."/>
        </authorList>
    </citation>
    <scope>FUNCTION</scope>
    <scope>INTERACTION WITH PIEZO1 AND PIEZO2</scope>
    <scope>PALMITOYLATION</scope>
</reference>
<reference key="9">
    <citation type="journal article" date="2008" name="Proc. Natl. Acad. Sci. U.S.A.">
        <title>A quantitative atlas of mitotic phosphorylation.</title>
        <authorList>
            <person name="Dephoure N."/>
            <person name="Zhou C."/>
            <person name="Villen J."/>
            <person name="Beausoleil S.A."/>
            <person name="Bakalarski C.E."/>
            <person name="Elledge S.J."/>
            <person name="Gygi S.P."/>
        </authorList>
    </citation>
    <scope>PHOSPHORYLATION [LARGE SCALE ANALYSIS] AT SER-140</scope>
    <scope>IDENTIFICATION BY MASS SPECTROMETRY [LARGE SCALE ANALYSIS]</scope>
    <source>
        <tissue>Cervix carcinoma</tissue>
    </source>
</reference>
<reference key="10">
    <citation type="journal article" date="2013" name="J. Proteome Res.">
        <title>Toward a comprehensive characterization of a human cancer cell phosphoproteome.</title>
        <authorList>
            <person name="Zhou H."/>
            <person name="Di Palma S."/>
            <person name="Preisinger C."/>
            <person name="Peng M."/>
            <person name="Polat A.N."/>
            <person name="Heck A.J."/>
            <person name="Mohammed S."/>
        </authorList>
    </citation>
    <scope>PHOSPHORYLATION [LARGE SCALE ANALYSIS] AT SER-128; SER-140 AND SER-143</scope>
    <scope>IDENTIFICATION BY MASS SPECTROMETRY [LARGE SCALE ANALYSIS]</scope>
    <source>
        <tissue>Cervix carcinoma</tissue>
    </source>
</reference>
<reference key="11">
    <citation type="journal article" date="2022" name="Sci. Transl. Med.">
        <title>Pathogenic variants in MDFIC cause recessive central conducting lymphatic anomaly with lymphedema.</title>
        <authorList>
            <person name="Byrne A.B."/>
            <person name="Brouillard P."/>
            <person name="Sutton D.L."/>
            <person name="Kazenwadel J."/>
            <person name="Montazaribarforoushi S."/>
            <person name="Secker G.A."/>
            <person name="Oszmiana A."/>
            <person name="Babic M."/>
            <person name="Betterman K.L."/>
            <person name="Brautigan P.J."/>
            <person name="White M."/>
            <person name="Piltz S.G."/>
            <person name="Thomas P.Q."/>
            <person name="Hahn C.N."/>
            <person name="Rath M."/>
            <person name="Felbor U."/>
            <person name="Korenke G.C."/>
            <person name="Smith C.L."/>
            <person name="Wood K.H."/>
            <person name="Sheppard S.E."/>
            <person name="Adams D.M."/>
            <person name="Kariminejad A."/>
            <person name="Helaers R."/>
            <person name="Boon L.M."/>
            <person name="Revencu N."/>
            <person name="Moore L."/>
            <person name="Barnett C."/>
            <person name="Haan E."/>
            <person name="Arts P."/>
            <person name="Vikkula M."/>
            <person name="Scott H.S."/>
            <person name="Harvey N.L."/>
        </authorList>
    </citation>
    <scope>VARIANTS LMPHM12 63-GLY--SER-246 DEL AND LEU-244</scope>
    <scope>INVOLVEMENT IN LMPHM12</scope>
    <scope>TISSUE SPECIFICITY</scope>
    <scope>SUBCELLULAR LOCATION</scope>
    <scope>FUNCTION</scope>
</reference>
<organism>
    <name type="scientific">Homo sapiens</name>
    <name type="common">Human</name>
    <dbReference type="NCBI Taxonomy" id="9606"/>
    <lineage>
        <taxon>Eukaryota</taxon>
        <taxon>Metazoa</taxon>
        <taxon>Chordata</taxon>
        <taxon>Craniata</taxon>
        <taxon>Vertebrata</taxon>
        <taxon>Euteleostomi</taxon>
        <taxon>Mammalia</taxon>
        <taxon>Eutheria</taxon>
        <taxon>Euarchontoglires</taxon>
        <taxon>Primates</taxon>
        <taxon>Haplorrhini</taxon>
        <taxon>Catarrhini</taxon>
        <taxon>Hominidae</taxon>
        <taxon>Homo</taxon>
    </lineage>
</organism>
<evidence type="ECO:0000250" key="1">
    <source>
        <dbReference type="UniProtKB" id="Q8BX65"/>
    </source>
</evidence>
<evidence type="ECO:0000255" key="2"/>
<evidence type="ECO:0000256" key="3">
    <source>
        <dbReference type="SAM" id="MobiDB-lite"/>
    </source>
</evidence>
<evidence type="ECO:0000269" key="4">
    <source>
    </source>
</evidence>
<evidence type="ECO:0000269" key="5">
    <source>
    </source>
</evidence>
<evidence type="ECO:0000269" key="6">
    <source>
    </source>
</evidence>
<evidence type="ECO:0000269" key="7">
    <source>
    </source>
</evidence>
<evidence type="ECO:0000269" key="8">
    <source>
    </source>
</evidence>
<evidence type="ECO:0000269" key="9">
    <source>
    </source>
</evidence>
<evidence type="ECO:0000269" key="10">
    <source>
    </source>
</evidence>
<evidence type="ECO:0000269" key="11">
    <source>
    </source>
</evidence>
<evidence type="ECO:0000269" key="12">
    <source ref="6"/>
</evidence>
<evidence type="ECO:0000303" key="13">
    <source>
    </source>
</evidence>
<evidence type="ECO:0000305" key="14"/>
<evidence type="ECO:0000312" key="15">
    <source>
        <dbReference type="EMBL" id="AAF36998.1"/>
    </source>
</evidence>
<evidence type="ECO:0000312" key="16">
    <source>
        <dbReference type="EMBL" id="AAP33842.1"/>
    </source>
</evidence>
<evidence type="ECO:0000312" key="17">
    <source>
        <dbReference type="HGNC" id="HGNC:28870"/>
    </source>
</evidence>
<evidence type="ECO:0007744" key="18">
    <source>
    </source>
</evidence>
<evidence type="ECO:0007744" key="19">
    <source>
    </source>
</evidence>
<comment type="function">
    <text evidence="1 6 10 11">Required to control the activity of various transcription factors through their sequestration in the cytoplasm. Retains nuclear Zic proteins ZIC1, ZIC2 and ZIC3 in the cytoplasm and inhibits their transcriptional activation (By similarity). Modulates the expression from cellular promoters. Binds to the axin complex, resulting in an increase in the level of free beta-catenin (PubMed:12192039). Affects axin regulation of the WNT and JNK signaling pathways (PubMed:12192039). Involved in the development of lymphatic vessel valves (By similarity). Required to promote lymphatic endothelial cell migration, in a process that involves down-regulation of integrin beta 1 activation and control of cell adhesion to the extracellular matrix (PubMed:35235341). Regulates the activity of mechanosensitive Piezo channel (PubMed:37590348).</text>
</comment>
<comment type="function">
    <text evidence="4 7 8 12">(Microbial infection) Modulates the expression from viral promoters. Down-regulates Tat-dependent transcription of the human immunodeficiency virus type 1 (HIV-1) LTR by interacting with HIV-1 Tat and Rev and impairing their nuclear import, probably by rendering the NLS domains inaccessible to importin-beta (PubMed:12944466, PubMed:16260749, Ref.6). Also stimulates activation of human T-cell leukemia virus type I (HTLV-I) LTR (PubMed:10671520).</text>
</comment>
<comment type="subunit">
    <text evidence="1 6 9">Interacts with HAND1; the interaction sequesters HAND1 into the nucleolus and inhibits its activity (By similarity). Interacts (via C-terminus) with ZIC2 (By similarity). Interacts (via C-terminus) with AXIN1, the histidine-rich region of CCNT1/cyclin-T and weakly with LEF1 (PubMed:12192039). Interacts with CCNT2 (PubMed:17289077). Interacts with GATA2 (By similarity). Interacts (via C-terminus) with Piezo channel composed of PIEZO1 or PIEZO2; the interaction prolongs Piezo channel inactivation (By similarity).</text>
</comment>
<comment type="subunit">
    <text evidence="7 8 12">(Microbial infection) Interacts (via C-terminus) with HIV-1 Tat and Rev.</text>
</comment>
<comment type="subcellular location">
    <molecule>Isoform 1</molecule>
    <subcellularLocation>
        <location>Nucleus</location>
        <location>Nucleolus</location>
    </subcellularLocation>
    <text>Also shows a granular distribution in the cytoplasm.</text>
</comment>
<comment type="subcellular location">
    <molecule>Isoform 2</molecule>
    <subcellularLocation>
        <location evidence="4 5 7 8 10">Cytoplasm</location>
    </subcellularLocation>
    <subcellularLocation>
        <location evidence="1">Secreted</location>
    </subcellularLocation>
</comment>
<comment type="alternative products">
    <event type="alternative initiation"/>
    <isoform>
        <id>Q9P1T7-2</id>
        <name evidence="4 8">2</name>
        <name evidence="4">p32</name>
        <sequence type="displayed"/>
    </isoform>
    <isoform>
        <id>Q9P1T7-1</id>
        <name evidence="4">1</name>
        <name evidence="4">p40</name>
        <sequence type="described" ref="VSP_037970"/>
    </isoform>
</comment>
<comment type="tissue specificity">
    <text evidence="4 10">Expressed in lymphatic tissues. Detected in the spleen, thymus, peripheral blood leukocytes as well as prostate, uterus and small intestine. Expressed in lymphatic endothelial cells (PubMed:35235341).</text>
</comment>
<comment type="domain">
    <text evidence="5 6 7 8">The cysteine-rich C-terminus is involved in its granular distribution in the cytoplasm. The cysteine-rich C-terminus mediates protein-protein interactions, including interaction with HIV-1 Tat, transcription factors, AXIN1, CCNT1 (PubMed:12192039, PubMed:12944466, PubMed:16260749).</text>
</comment>
<comment type="PTM">
    <text evidence="11">Palmitoylated.</text>
</comment>
<comment type="disease" evidence="10">
    <disease id="DI-06490">
        <name>Lymphatic malformation 12</name>
        <acronym>LMPHM12</acronym>
        <description>A form of primary lymphedema, a disease characterized by swelling of body parts due to developmental anomalies and functional defects of the lymphatic system. Patients with lymphedema may suffer from recurrent local infections. LMPHM12 is an autosomal recessive, severe form often resulting in fetal or perinatal demise. It is characterized by dysfunction of core collecting lymphatic vessels, including the thoracic duct and cisterna chyli, non-immune hydrops fetalis, chylothorax, pleural effusions, and chylous ascites.</description>
        <dbReference type="MIM" id="620014"/>
    </disease>
    <text>The disease is caused by variants affecting the gene represented in this entry.</text>
</comment>
<comment type="miscellaneous">
    <molecule>Isoform 2</molecule>
    <text>Major isoform.</text>
</comment>
<comment type="miscellaneous">
    <molecule>Isoform 1</molecule>
    <text evidence="14">Minor isoform. Initiates from a GTG codon. Contains a Nucleolar localization signal at positions 45-63.</text>
</comment>
<comment type="similarity">
    <text evidence="2">Belongs to the MDFI family.</text>
</comment>
<dbReference type="EMBL" id="AF054589">
    <property type="protein sequence ID" value="AAF36998.1"/>
    <property type="molecule type" value="mRNA"/>
</dbReference>
<dbReference type="EMBL" id="AF054589">
    <property type="protein sequence ID" value="AAF36999.1"/>
    <property type="molecule type" value="mRNA"/>
</dbReference>
<dbReference type="EMBL" id="AY196485">
    <property type="protein sequence ID" value="AAP33842.1"/>
    <property type="molecule type" value="mRNA"/>
</dbReference>
<dbReference type="CCDS" id="CCDS55155.1">
    <molecule id="Q9P1T7-2"/>
</dbReference>
<dbReference type="RefSeq" id="NP_001159817.1">
    <molecule id="Q9P1T7-2"/>
    <property type="nucleotide sequence ID" value="NM_001166345.3"/>
</dbReference>
<dbReference type="RefSeq" id="NP_951038.1">
    <molecule id="Q9P1T7-1"/>
    <property type="nucleotide sequence ID" value="NM_199072.5"/>
</dbReference>
<dbReference type="PDB" id="8YFC">
    <property type="method" value="EM"/>
    <property type="resolution" value="3.20 A"/>
    <property type="chains" value="C/E/F=1-246"/>
</dbReference>
<dbReference type="PDB" id="8YFG">
    <property type="method" value="EM"/>
    <property type="resolution" value="4.50 A"/>
    <property type="chains" value="C/E/F=1-246"/>
</dbReference>
<dbReference type="PDB" id="8ZU3">
    <property type="method" value="EM"/>
    <property type="resolution" value="3.10 A"/>
    <property type="chains" value="C/E/F=1-246"/>
</dbReference>
<dbReference type="PDBsum" id="8YFC"/>
<dbReference type="PDBsum" id="8YFG"/>
<dbReference type="PDBsum" id="8ZU3"/>
<dbReference type="EMDB" id="EMD-39219"/>
<dbReference type="EMDB" id="EMD-39223"/>
<dbReference type="EMDB" id="EMD-60479"/>
<dbReference type="SMR" id="Q9P1T7"/>
<dbReference type="BioGRID" id="119002">
    <property type="interactions" value="16"/>
</dbReference>
<dbReference type="FunCoup" id="Q9P1T7">
    <property type="interactions" value="2151"/>
</dbReference>
<dbReference type="IntAct" id="Q9P1T7">
    <property type="interactions" value="11"/>
</dbReference>
<dbReference type="STRING" id="9606.ENSP00000257724"/>
<dbReference type="TCDB" id="1.A.75.1.1">
    <property type="family name" value="the mechanical nociceptor, piezo (piezo) family"/>
</dbReference>
<dbReference type="TCDB" id="1.A.75.1.2">
    <property type="family name" value="the mechanical nociceptor, piezo (piezo) family"/>
</dbReference>
<dbReference type="iPTMnet" id="Q9P1T7"/>
<dbReference type="PhosphoSitePlus" id="Q9P1T7"/>
<dbReference type="SwissPalm" id="Q9P1T7"/>
<dbReference type="BioMuta" id="MDFIC"/>
<dbReference type="DMDM" id="257051035"/>
<dbReference type="jPOST" id="Q9P1T7"/>
<dbReference type="MassIVE" id="Q9P1T7"/>
<dbReference type="PaxDb" id="9606-ENSP00000484656"/>
<dbReference type="PeptideAtlas" id="Q9P1T7"/>
<dbReference type="ProteomicsDB" id="83663">
    <molecule id="Q9P1T7-2"/>
</dbReference>
<dbReference type="ProteomicsDB" id="83664">
    <molecule id="Q9P1T7-1"/>
</dbReference>
<dbReference type="Pumba" id="Q9P1T7"/>
<dbReference type="TopDownProteomics" id="Q9P1T7-1">
    <molecule id="Q9P1T7-1"/>
</dbReference>
<dbReference type="Antibodypedia" id="31567">
    <property type="antibodies" value="149 antibodies from 24 providers"/>
</dbReference>
<dbReference type="DNASU" id="29969"/>
<dbReference type="Ensembl" id="ENST00000393486.6">
    <molecule id="Q9P1T7-2"/>
    <property type="protein sequence ID" value="ENSP00000377126.1"/>
    <property type="gene ID" value="ENSG00000135272.13"/>
</dbReference>
<dbReference type="GeneID" id="29969"/>
<dbReference type="KEGG" id="hsa:29969"/>
<dbReference type="MANE-Select" id="ENST00000393486.6">
    <property type="protein sequence ID" value="ENSP00000377126.1"/>
    <property type="RefSeq nucleotide sequence ID" value="NM_001166345.3"/>
    <property type="RefSeq protein sequence ID" value="NP_001159817.1"/>
</dbReference>
<dbReference type="UCSC" id="uc064hfm.1">
    <molecule id="Q9P1T7-2"/>
    <property type="organism name" value="human"/>
</dbReference>
<dbReference type="AGR" id="HGNC:28870"/>
<dbReference type="CTD" id="29969"/>
<dbReference type="DisGeNET" id="29969"/>
<dbReference type="GeneCards" id="MDFIC"/>
<dbReference type="HGNC" id="HGNC:28870">
    <property type="gene designation" value="MDFIC"/>
</dbReference>
<dbReference type="HPA" id="ENSG00000135272">
    <property type="expression patterns" value="Low tissue specificity"/>
</dbReference>
<dbReference type="MalaCards" id="MDFIC"/>
<dbReference type="MIM" id="614511">
    <property type="type" value="gene"/>
</dbReference>
<dbReference type="MIM" id="620014">
    <property type="type" value="phenotype"/>
</dbReference>
<dbReference type="neXtProt" id="NX_Q9P1T7"/>
<dbReference type="OpenTargets" id="ENSG00000135272"/>
<dbReference type="PharmGKB" id="PA142671474"/>
<dbReference type="VEuPathDB" id="HostDB:ENSG00000135272"/>
<dbReference type="eggNOG" id="ENOG502QSK8">
    <property type="taxonomic scope" value="Eukaryota"/>
</dbReference>
<dbReference type="GeneTree" id="ENSGT00940000158685"/>
<dbReference type="HOGENOM" id="CLU_067479_0_1_1"/>
<dbReference type="InParanoid" id="Q9P1T7"/>
<dbReference type="OMA" id="CDQDNTE"/>
<dbReference type="OrthoDB" id="8958154at2759"/>
<dbReference type="PAN-GO" id="Q9P1T7">
    <property type="GO annotations" value="5 GO annotations based on evolutionary models"/>
</dbReference>
<dbReference type="PhylomeDB" id="Q9P1T7"/>
<dbReference type="PathwayCommons" id="Q9P1T7"/>
<dbReference type="SignaLink" id="Q9P1T7"/>
<dbReference type="BioGRID-ORCS" id="29969">
    <property type="hits" value="9 hits in 1152 CRISPR screens"/>
</dbReference>
<dbReference type="CD-CODE" id="91857CE7">
    <property type="entry name" value="Nucleolus"/>
</dbReference>
<dbReference type="ChiTaRS" id="MDFIC">
    <property type="organism name" value="human"/>
</dbReference>
<dbReference type="GenomeRNAi" id="29969"/>
<dbReference type="Pharos" id="Q9P1T7">
    <property type="development level" value="Tbio"/>
</dbReference>
<dbReference type="PRO" id="PR:Q9P1T7"/>
<dbReference type="Proteomes" id="UP000005640">
    <property type="component" value="Chromosome 7"/>
</dbReference>
<dbReference type="RNAct" id="Q9P1T7">
    <property type="molecule type" value="protein"/>
</dbReference>
<dbReference type="Bgee" id="ENSG00000135272">
    <property type="expression patterns" value="Expressed in amniotic fluid and 197 other cell types or tissues"/>
</dbReference>
<dbReference type="ExpressionAtlas" id="Q9P1T7">
    <property type="expression patterns" value="baseline and differential"/>
</dbReference>
<dbReference type="GO" id="GO:0005737">
    <property type="term" value="C:cytoplasm"/>
    <property type="evidence" value="ECO:0000314"/>
    <property type="project" value="UniProtKB"/>
</dbReference>
<dbReference type="GO" id="GO:0005576">
    <property type="term" value="C:extracellular region"/>
    <property type="evidence" value="ECO:0007669"/>
    <property type="project" value="UniProtKB-SubCell"/>
</dbReference>
<dbReference type="GO" id="GO:0005730">
    <property type="term" value="C:nucleolus"/>
    <property type="evidence" value="ECO:0000314"/>
    <property type="project" value="UniProtKB"/>
</dbReference>
<dbReference type="GO" id="GO:0005634">
    <property type="term" value="C:nucleus"/>
    <property type="evidence" value="ECO:0000314"/>
    <property type="project" value="UniProtKB"/>
</dbReference>
<dbReference type="GO" id="GO:0005886">
    <property type="term" value="C:plasma membrane"/>
    <property type="evidence" value="ECO:0007669"/>
    <property type="project" value="UniProtKB-SubCell"/>
</dbReference>
<dbReference type="GO" id="GO:0030332">
    <property type="term" value="F:cyclin binding"/>
    <property type="evidence" value="ECO:0000353"/>
    <property type="project" value="UniProtKB"/>
</dbReference>
<dbReference type="GO" id="GO:0140297">
    <property type="term" value="F:DNA-binding transcription factor binding"/>
    <property type="evidence" value="ECO:0000353"/>
    <property type="project" value="UniProtKB"/>
</dbReference>
<dbReference type="GO" id="GO:0030957">
    <property type="term" value="F:Tat protein binding"/>
    <property type="evidence" value="ECO:0000314"/>
    <property type="project" value="UniProtKB"/>
</dbReference>
<dbReference type="GO" id="GO:0045892">
    <property type="term" value="P:negative regulation of DNA-templated transcription"/>
    <property type="evidence" value="ECO:0000250"/>
    <property type="project" value="UniProtKB"/>
</dbReference>
<dbReference type="GO" id="GO:0042308">
    <property type="term" value="P:negative regulation of protein import into nucleus"/>
    <property type="evidence" value="ECO:0000250"/>
    <property type="project" value="UniProtKB"/>
</dbReference>
<dbReference type="GO" id="GO:0045893">
    <property type="term" value="P:positive regulation of DNA-templated transcription"/>
    <property type="evidence" value="ECO:0000314"/>
    <property type="project" value="UniProtKB"/>
</dbReference>
<dbReference type="GO" id="GO:0050434">
    <property type="term" value="P:positive regulation of viral transcription"/>
    <property type="evidence" value="ECO:0000314"/>
    <property type="project" value="UniProtKB"/>
</dbReference>
<dbReference type="GO" id="GO:0046328">
    <property type="term" value="P:regulation of JNK cascade"/>
    <property type="evidence" value="ECO:0000314"/>
    <property type="project" value="UniProtKB"/>
</dbReference>
<dbReference type="GO" id="GO:0030111">
    <property type="term" value="P:regulation of Wnt signaling pathway"/>
    <property type="evidence" value="ECO:0000314"/>
    <property type="project" value="UniProtKB"/>
</dbReference>
<dbReference type="InterPro" id="IPR026134">
    <property type="entry name" value="MDFI/MDFIC"/>
</dbReference>
<dbReference type="PANTHER" id="PTHR15304">
    <property type="entry name" value="MYOD FAMILY INHIBITOR"/>
    <property type="match status" value="1"/>
</dbReference>
<dbReference type="PANTHER" id="PTHR15304:SF0">
    <property type="entry name" value="MYOD FAMILY INHIBITOR DOMAIN-CONTAINING PROTEIN"/>
    <property type="match status" value="1"/>
</dbReference>
<dbReference type="Pfam" id="PF15316">
    <property type="entry name" value="MDFI"/>
    <property type="match status" value="1"/>
</dbReference>
<keyword id="KW-0002">3D-structure</keyword>
<keyword id="KW-0024">Alternative initiation</keyword>
<keyword id="KW-0963">Cytoplasm</keyword>
<keyword id="KW-0225">Disease variant</keyword>
<keyword id="KW-0945">Host-virus interaction</keyword>
<keyword id="KW-0539">Nucleus</keyword>
<keyword id="KW-0597">Phosphoprotein</keyword>
<keyword id="KW-1267">Proteomics identification</keyword>
<keyword id="KW-1185">Reference proteome</keyword>
<keyword id="KW-0964">Secreted</keyword>
<keyword id="KW-0804">Transcription</keyword>
<keyword id="KW-0805">Transcription regulation</keyword>
<sequence length="246" mass="25788">MSGAGEALAPGPVGPQRVAEAGGGQLGSTAQGKCDKDNTEKDITQATNSHFTHGEMQDQSIWGNPSDGELIRTQPQRLPQLQTSAQVPSGEEIGKIKNGHTGLSNGNGIHHGAKHGSADNRKLSAPVSQKMHRKIQSSLSVNSDISKKSKVNAVFSQKTGSSPEDCCVHCILACLFCEFLTLCNIVLGQASCGICTSEACCCCCGDEMGDDCNCPCDMDCGIMDACCESSDCLEICMECCGICFPS</sequence>
<name>MDFIC_HUMAN</name>
<accession>Q9P1T7</accession>
<accession>Q9P1T6</accession>
<protein>
    <recommendedName>
        <fullName>MyoD family inhibitor domain-containing protein</fullName>
    </recommendedName>
    <alternativeName>
        <fullName>I-mfa domain-containing protein</fullName>
        <shortName>hIC</shortName>
    </alternativeName>
</protein>
<feature type="chain" id="PRO_0000280222" description="MyoD family inhibitor domain-containing protein">
    <location>
        <begin position="1"/>
        <end position="246"/>
    </location>
</feature>
<feature type="domain" description="MDFI">
    <location>
        <begin position="74"/>
        <end position="246"/>
    </location>
</feature>
<feature type="region of interest" description="Disordered" evidence="3">
    <location>
        <begin position="1"/>
        <end position="71"/>
    </location>
</feature>
<feature type="compositionally biased region" description="Basic and acidic residues" evidence="3">
    <location>
        <begin position="33"/>
        <end position="43"/>
    </location>
</feature>
<feature type="compositionally biased region" description="Polar residues" evidence="3">
    <location>
        <begin position="44"/>
        <end position="63"/>
    </location>
</feature>
<feature type="modified residue" description="Phosphoserine" evidence="19">
    <location>
        <position position="128"/>
    </location>
</feature>
<feature type="modified residue" description="Phosphoserine" evidence="18 19">
    <location>
        <position position="140"/>
    </location>
</feature>
<feature type="modified residue" description="Phosphoserine" evidence="19">
    <location>
        <position position="143"/>
    </location>
</feature>
<feature type="splice variant" id="VSP_037970" description="In isoform 1." evidence="13">
    <original>M</original>
    <variation>MRGVRAATAAAVAATAASGLSRREAGGRAGAAAAVVRPPGRKCGRCRRLANFPGRKRRRRRRKGLGATTGGCGEAVSSLHPAPHSPSSVRPAGRRARRQRRGAGSAERPM</variation>
    <location>
        <position position="1"/>
    </location>
</feature>
<feature type="sequence variant" id="VAR_087574" description="In LMPHM12." evidence="10">
    <location>
        <begin position="63"/>
        <end position="246"/>
    </location>
</feature>
<feature type="sequence variant" id="VAR_087575" description="In LMPHM12; uncertain significance; dbSNP:rs77149653." evidence="10">
    <original>F</original>
    <variation>L</variation>
    <location>
        <position position="244"/>
    </location>
</feature>
<proteinExistence type="evidence at protein level"/>
<gene>
    <name evidence="17" type="primary">MDFIC</name>
</gene>